<gene>
    <name evidence="1" type="primary">rpsH</name>
    <name type="ordered locus">MHP7448_0180</name>
</gene>
<reference key="1">
    <citation type="journal article" date="2005" name="J. Bacteriol.">
        <title>Swine and poultry pathogens: the complete genome sequences of two strains of Mycoplasma hyopneumoniae and a strain of Mycoplasma synoviae.</title>
        <authorList>
            <person name="Vasconcelos A.T.R."/>
            <person name="Ferreira H.B."/>
            <person name="Bizarro C.V."/>
            <person name="Bonatto S.L."/>
            <person name="Carvalho M.O."/>
            <person name="Pinto P.M."/>
            <person name="Almeida D.F."/>
            <person name="Almeida L.G.P."/>
            <person name="Almeida R."/>
            <person name="Alves-Junior L."/>
            <person name="Assuncao E.N."/>
            <person name="Azevedo V.A.C."/>
            <person name="Bogo M.R."/>
            <person name="Brigido M.M."/>
            <person name="Brocchi M."/>
            <person name="Burity H.A."/>
            <person name="Camargo A.A."/>
            <person name="Camargo S.S."/>
            <person name="Carepo M.S."/>
            <person name="Carraro D.M."/>
            <person name="de Mattos Cascardo J.C."/>
            <person name="Castro L.A."/>
            <person name="Cavalcanti G."/>
            <person name="Chemale G."/>
            <person name="Collevatti R.G."/>
            <person name="Cunha C.W."/>
            <person name="Dallagiovanna B."/>
            <person name="Dambros B.P."/>
            <person name="Dellagostin O.A."/>
            <person name="Falcao C."/>
            <person name="Fantinatti-Garboggini F."/>
            <person name="Felipe M.S.S."/>
            <person name="Fiorentin L."/>
            <person name="Franco G.R."/>
            <person name="Freitas N.S.A."/>
            <person name="Frias D."/>
            <person name="Grangeiro T.B."/>
            <person name="Grisard E.C."/>
            <person name="Guimaraes C.T."/>
            <person name="Hungria M."/>
            <person name="Jardim S.N."/>
            <person name="Krieger M.A."/>
            <person name="Laurino J.P."/>
            <person name="Lima L.F.A."/>
            <person name="Lopes M.I."/>
            <person name="Loreto E.L.S."/>
            <person name="Madeira H.M.F."/>
            <person name="Manfio G.P."/>
            <person name="Maranhao A.Q."/>
            <person name="Martinkovics C.T."/>
            <person name="Medeiros S.R.B."/>
            <person name="Moreira M.A.M."/>
            <person name="Neiva M."/>
            <person name="Ramalho-Neto C.E."/>
            <person name="Nicolas M.F."/>
            <person name="Oliveira S.C."/>
            <person name="Paixao R.F.C."/>
            <person name="Pedrosa F.O."/>
            <person name="Pena S.D.J."/>
            <person name="Pereira M."/>
            <person name="Pereira-Ferrari L."/>
            <person name="Piffer I."/>
            <person name="Pinto L.S."/>
            <person name="Potrich D.P."/>
            <person name="Salim A.C.M."/>
            <person name="Santos F.R."/>
            <person name="Schmitt R."/>
            <person name="Schneider M.P.C."/>
            <person name="Schrank A."/>
            <person name="Schrank I.S."/>
            <person name="Schuck A.F."/>
            <person name="Seuanez H.N."/>
            <person name="Silva D.W."/>
            <person name="Silva R."/>
            <person name="Silva S.C."/>
            <person name="Soares C.M.A."/>
            <person name="Souza K.R.L."/>
            <person name="Souza R.C."/>
            <person name="Staats C.C."/>
            <person name="Steffens M.B.R."/>
            <person name="Teixeira S.M.R."/>
            <person name="Urmenyi T.P."/>
            <person name="Vainstein M.H."/>
            <person name="Zuccherato L.W."/>
            <person name="Simpson A.J.G."/>
            <person name="Zaha A."/>
        </authorList>
    </citation>
    <scope>NUCLEOTIDE SEQUENCE [LARGE SCALE GENOMIC DNA]</scope>
    <source>
        <strain>7448</strain>
    </source>
</reference>
<feature type="chain" id="PRO_0000225873" description="Small ribosomal subunit protein uS8">
    <location>
        <begin position="1"/>
        <end position="131"/>
    </location>
</feature>
<name>RS8_MESH7</name>
<protein>
    <recommendedName>
        <fullName evidence="1">Small ribosomal subunit protein uS8</fullName>
    </recommendedName>
    <alternativeName>
        <fullName evidence="2">30S ribosomal protein S8</fullName>
    </alternativeName>
</protein>
<keyword id="KW-0687">Ribonucleoprotein</keyword>
<keyword id="KW-0689">Ribosomal protein</keyword>
<keyword id="KW-0694">RNA-binding</keyword>
<keyword id="KW-0699">rRNA-binding</keyword>
<proteinExistence type="inferred from homology"/>
<organism>
    <name type="scientific">Mesomycoplasma hyopneumoniae (strain 7448)</name>
    <name type="common">Mycoplasma hyopneumoniae</name>
    <dbReference type="NCBI Taxonomy" id="262722"/>
    <lineage>
        <taxon>Bacteria</taxon>
        <taxon>Bacillati</taxon>
        <taxon>Mycoplasmatota</taxon>
        <taxon>Mycoplasmoidales</taxon>
        <taxon>Metamycoplasmataceae</taxon>
        <taxon>Mesomycoplasma</taxon>
    </lineage>
</organism>
<dbReference type="EMBL" id="AE017244">
    <property type="protein sequence ID" value="AAZ53554.1"/>
    <property type="molecule type" value="Genomic_DNA"/>
</dbReference>
<dbReference type="RefSeq" id="WP_011206039.1">
    <property type="nucleotide sequence ID" value="NC_007332.1"/>
</dbReference>
<dbReference type="SMR" id="Q4A8I5"/>
<dbReference type="GeneID" id="41334479"/>
<dbReference type="KEGG" id="mhp:MHP7448_0180"/>
<dbReference type="HOGENOM" id="CLU_098428_0_2_14"/>
<dbReference type="Proteomes" id="UP000000553">
    <property type="component" value="Chromosome"/>
</dbReference>
<dbReference type="GO" id="GO:1990904">
    <property type="term" value="C:ribonucleoprotein complex"/>
    <property type="evidence" value="ECO:0007669"/>
    <property type="project" value="UniProtKB-KW"/>
</dbReference>
<dbReference type="GO" id="GO:0005840">
    <property type="term" value="C:ribosome"/>
    <property type="evidence" value="ECO:0007669"/>
    <property type="project" value="UniProtKB-KW"/>
</dbReference>
<dbReference type="GO" id="GO:0019843">
    <property type="term" value="F:rRNA binding"/>
    <property type="evidence" value="ECO:0007669"/>
    <property type="project" value="UniProtKB-UniRule"/>
</dbReference>
<dbReference type="GO" id="GO:0003735">
    <property type="term" value="F:structural constituent of ribosome"/>
    <property type="evidence" value="ECO:0007669"/>
    <property type="project" value="InterPro"/>
</dbReference>
<dbReference type="GO" id="GO:0006412">
    <property type="term" value="P:translation"/>
    <property type="evidence" value="ECO:0007669"/>
    <property type="project" value="UniProtKB-UniRule"/>
</dbReference>
<dbReference type="FunFam" id="3.30.1370.30:FF:000002">
    <property type="entry name" value="30S ribosomal protein S8"/>
    <property type="match status" value="1"/>
</dbReference>
<dbReference type="FunFam" id="3.30.1490.10:FF:000001">
    <property type="entry name" value="30S ribosomal protein S8"/>
    <property type="match status" value="1"/>
</dbReference>
<dbReference type="Gene3D" id="3.30.1370.30">
    <property type="match status" value="1"/>
</dbReference>
<dbReference type="Gene3D" id="3.30.1490.10">
    <property type="match status" value="1"/>
</dbReference>
<dbReference type="HAMAP" id="MF_01302_B">
    <property type="entry name" value="Ribosomal_uS8_B"/>
    <property type="match status" value="1"/>
</dbReference>
<dbReference type="InterPro" id="IPR000630">
    <property type="entry name" value="Ribosomal_uS8"/>
</dbReference>
<dbReference type="InterPro" id="IPR047863">
    <property type="entry name" value="Ribosomal_uS8_CS"/>
</dbReference>
<dbReference type="InterPro" id="IPR035987">
    <property type="entry name" value="Ribosomal_uS8_sf"/>
</dbReference>
<dbReference type="NCBIfam" id="NF001109">
    <property type="entry name" value="PRK00136.1"/>
    <property type="match status" value="1"/>
</dbReference>
<dbReference type="PANTHER" id="PTHR11758">
    <property type="entry name" value="40S RIBOSOMAL PROTEIN S15A"/>
    <property type="match status" value="1"/>
</dbReference>
<dbReference type="Pfam" id="PF00410">
    <property type="entry name" value="Ribosomal_S8"/>
    <property type="match status" value="1"/>
</dbReference>
<dbReference type="SUPFAM" id="SSF56047">
    <property type="entry name" value="Ribosomal protein S8"/>
    <property type="match status" value="1"/>
</dbReference>
<dbReference type="PROSITE" id="PS00053">
    <property type="entry name" value="RIBOSOMAL_S8"/>
    <property type="match status" value="1"/>
</dbReference>
<sequence length="131" mass="14613">MAFITDPIADMLTRIRNATIRKHKNVSFQHSKTKVKILEIIQKAGYIKDFQVEGDLKKNITVELKYKGNLSSISGLKRISKPSLRVYTSASKIPFVQSGFGIAILSTSKGLLTDSQARKENVGGEIIAYIW</sequence>
<evidence type="ECO:0000255" key="1">
    <source>
        <dbReference type="HAMAP-Rule" id="MF_01302"/>
    </source>
</evidence>
<evidence type="ECO:0000305" key="2"/>
<comment type="function">
    <text evidence="1">One of the primary rRNA binding proteins, it binds directly to 16S rRNA central domain where it helps coordinate assembly of the platform of the 30S subunit.</text>
</comment>
<comment type="subunit">
    <text evidence="1">Part of the 30S ribosomal subunit. Contacts proteins S5 and S12.</text>
</comment>
<comment type="similarity">
    <text evidence="1">Belongs to the universal ribosomal protein uS8 family.</text>
</comment>
<accession>Q4A8I5</accession>